<gene>
    <name evidence="9" type="primary">ENDO5</name>
    <name evidence="11" type="ordered locus">At4g21600</name>
    <name evidence="13" type="ORF">F17L22.60</name>
    <name evidence="12" type="ORF">F18E5.220</name>
</gene>
<sequence length="296" mass="33610">MRLWIVSVLVLTHLVHGALCWGKDGHYTVCKLAEGFFEDDTIAAVKKLLPESVDGGGLADFCSWPDEIKKLSQWQWTSTLHYVNTPEYRCNYEYCRDCHDTHKHKDWCVTGAIFNYTNQLMSASENSQNIVHYNLTEALLFLSHYMGDVHQPLHTGFLGDLGGNTIIVNWYHNKSNLHHVWDNMIIDSALETYYNSSLPHMIQALQAKLKNGWSNDVPSWKSCHFHQKACPNLYASESIDLACKYAYRNATPGTTLGDEYFLSRLPVVEKRLAQGGIRLAATLNRIFSAKPKLAGL</sequence>
<keyword id="KW-1015">Disulfide bond</keyword>
<keyword id="KW-0255">Endonuclease</keyword>
<keyword id="KW-0325">Glycoprotein</keyword>
<keyword id="KW-0378">Hydrolase</keyword>
<keyword id="KW-0479">Metal-binding</keyword>
<keyword id="KW-0540">Nuclease</keyword>
<keyword id="KW-1185">Reference proteome</keyword>
<keyword id="KW-0732">Signal</keyword>
<keyword id="KW-0862">Zinc</keyword>
<proteinExistence type="evidence at protein level"/>
<protein>
    <recommendedName>
        <fullName evidence="9">Endonuclease 5</fullName>
        <shortName evidence="9">AtENDO5</shortName>
        <ecNumber evidence="7 8">3.1.30.1</ecNumber>
    </recommendedName>
    <alternativeName>
        <fullName evidence="9">Deoxyribonuclease ENDO5</fullName>
    </alternativeName>
    <alternativeName>
        <fullName evidence="9">Single-stranded-nucleate endonuclease ENDO5</fullName>
    </alternativeName>
</protein>
<evidence type="ECO:0000250" key="1"/>
<evidence type="ECO:0000250" key="2">
    <source>
        <dbReference type="UniProtKB" id="P24021"/>
    </source>
</evidence>
<evidence type="ECO:0000250" key="3">
    <source>
        <dbReference type="UniProtKB" id="P24289"/>
    </source>
</evidence>
<evidence type="ECO:0000250" key="4">
    <source>
        <dbReference type="UniProtKB" id="Q9C9G4"/>
    </source>
</evidence>
<evidence type="ECO:0000255" key="5"/>
<evidence type="ECO:0000255" key="6">
    <source>
        <dbReference type="PROSITE-ProRule" id="PRU00498"/>
    </source>
</evidence>
<evidence type="ECO:0000269" key="7">
    <source>
    </source>
</evidence>
<evidence type="ECO:0000269" key="8">
    <source>
    </source>
</evidence>
<evidence type="ECO:0000303" key="9">
    <source>
    </source>
</evidence>
<evidence type="ECO:0000305" key="10"/>
<evidence type="ECO:0000312" key="11">
    <source>
        <dbReference type="Araport" id="AT4G21600"/>
    </source>
</evidence>
<evidence type="ECO:0000312" key="12">
    <source>
        <dbReference type="EMBL" id="CAA18724.1"/>
    </source>
</evidence>
<evidence type="ECO:0000312" key="13">
    <source>
        <dbReference type="EMBL" id="CAB36804.1"/>
    </source>
</evidence>
<feature type="signal peptide" evidence="5">
    <location>
        <begin position="1"/>
        <end position="20"/>
    </location>
</feature>
<feature type="chain" id="PRO_0000417623" description="Endonuclease 5">
    <location>
        <begin position="21"/>
        <end position="280"/>
    </location>
</feature>
<feature type="propeptide" id="PRO_0000445544" description="Removed in mature form" evidence="8">
    <location>
        <begin position="281"/>
        <end position="296"/>
    </location>
</feature>
<feature type="region of interest" description="Substrate binding" evidence="4">
    <location>
        <begin position="144"/>
        <end position="193"/>
    </location>
</feature>
<feature type="binding site" evidence="4">
    <location>
        <begin position="21"/>
        <end position="26"/>
    </location>
    <ligand>
        <name>substrate</name>
    </ligand>
</feature>
<feature type="binding site" evidence="4">
    <location>
        <position position="21"/>
    </location>
    <ligand>
        <name>a divalent metal cation</name>
        <dbReference type="ChEBI" id="CHEBI:60240"/>
        <label>3</label>
    </ligand>
</feature>
<feature type="binding site" evidence="4">
    <location>
        <position position="26"/>
    </location>
    <ligand>
        <name>a divalent metal cation</name>
        <dbReference type="ChEBI" id="CHEBI:60240"/>
        <label>3</label>
    </ligand>
</feature>
<feature type="binding site" evidence="4">
    <location>
        <begin position="66"/>
        <end position="72"/>
    </location>
    <ligand>
        <name>substrate</name>
    </ligand>
</feature>
<feature type="binding site" evidence="4">
    <location>
        <position position="66"/>
    </location>
    <ligand>
        <name>a divalent metal cation</name>
        <dbReference type="ChEBI" id="CHEBI:60240"/>
        <label>1</label>
    </ligand>
</feature>
<feature type="binding site" evidence="3">
    <location>
        <begin position="81"/>
        <end position="84"/>
    </location>
    <ligand>
        <name>substrate</name>
    </ligand>
</feature>
<feature type="binding site" evidence="4">
    <location>
        <position position="81"/>
    </location>
    <ligand>
        <name>a divalent metal cation</name>
        <dbReference type="ChEBI" id="CHEBI:60240"/>
        <label>1</label>
    </ligand>
</feature>
<feature type="binding site" evidence="3">
    <location>
        <begin position="91"/>
        <end position="96"/>
    </location>
    <ligand>
        <name>substrate</name>
    </ligand>
</feature>
<feature type="binding site" evidence="4">
    <location>
        <position position="115"/>
    </location>
    <ligand>
        <name>substrate</name>
    </ligand>
</feature>
<feature type="binding site" evidence="4">
    <location>
        <position position="133"/>
    </location>
    <ligand>
        <name>substrate</name>
    </ligand>
</feature>
<feature type="binding site" evidence="4">
    <location>
        <position position="144"/>
    </location>
    <ligand>
        <name>a divalent metal cation</name>
        <dbReference type="ChEBI" id="CHEBI:60240"/>
        <label>1</label>
    </ligand>
</feature>
<feature type="binding site" evidence="4">
    <location>
        <position position="148"/>
    </location>
    <ligand>
        <name>a divalent metal cation</name>
        <dbReference type="ChEBI" id="CHEBI:60240"/>
        <label>1</label>
    </ligand>
</feature>
<feature type="binding site" evidence="4">
    <location>
        <position position="148"/>
    </location>
    <ligand>
        <name>a divalent metal cation</name>
        <dbReference type="ChEBI" id="CHEBI:60240"/>
        <label>3</label>
    </ligand>
</feature>
<feature type="binding site" evidence="4">
    <location>
        <position position="154"/>
    </location>
    <ligand>
        <name>a divalent metal cation</name>
        <dbReference type="ChEBI" id="CHEBI:60240"/>
        <label>2</label>
    </ligand>
</feature>
<feature type="binding site" evidence="4">
    <location>
        <position position="178"/>
    </location>
    <ligand>
        <name>a divalent metal cation</name>
        <dbReference type="ChEBI" id="CHEBI:60240"/>
        <label>2</label>
    </ligand>
</feature>
<feature type="binding site" evidence="4">
    <location>
        <position position="182"/>
    </location>
    <ligand>
        <name>a divalent metal cation</name>
        <dbReference type="ChEBI" id="CHEBI:60240"/>
        <label>2</label>
    </ligand>
</feature>
<feature type="site" description="Important for catalytic activity" evidence="2">
    <location>
        <position position="66"/>
    </location>
</feature>
<feature type="site" description="Important for catalytic activity" evidence="3">
    <location>
        <position position="69"/>
    </location>
</feature>
<feature type="glycosylation site" description="N-linked (GlcNAc...) asparagine" evidence="6">
    <location>
        <position position="115"/>
    </location>
</feature>
<feature type="glycosylation site" description="N-linked (GlcNAc...) asparagine" evidence="6">
    <location>
        <position position="134"/>
    </location>
</feature>
<feature type="glycosylation site" description="N-linked (GlcNAc...) asparagine" evidence="6">
    <location>
        <position position="173"/>
    </location>
</feature>
<feature type="glycosylation site" description="N-linked (GlcNAc...) asparagine" evidence="6">
    <location>
        <position position="195"/>
    </location>
</feature>
<feature type="disulfide bond" evidence="4">
    <location>
        <begin position="30"/>
        <end position="62"/>
    </location>
</feature>
<feature type="disulfide bond" evidence="4">
    <location>
        <begin position="90"/>
        <end position="243"/>
    </location>
</feature>
<feature type="disulfide bond" evidence="4">
    <location>
        <begin position="98"/>
        <end position="108"/>
    </location>
</feature>
<feature type="disulfide bond" evidence="4">
    <location>
        <begin position="223"/>
        <end position="230"/>
    </location>
</feature>
<feature type="mutagenesis site" description="Loss of activity." evidence="8">
    <location>
        <begin position="281"/>
        <end position="296"/>
    </location>
</feature>
<feature type="sequence conflict" description="In Ref. 3; AAM65542." evidence="10" ref="3">
    <original>K</original>
    <variation>R</variation>
    <location>
        <position position="105"/>
    </location>
</feature>
<reference key="1">
    <citation type="journal article" date="1999" name="Nature">
        <title>Sequence and analysis of chromosome 4 of the plant Arabidopsis thaliana.</title>
        <authorList>
            <person name="Mayer K.F.X."/>
            <person name="Schueller C."/>
            <person name="Wambutt R."/>
            <person name="Murphy G."/>
            <person name="Volckaert G."/>
            <person name="Pohl T."/>
            <person name="Duesterhoeft A."/>
            <person name="Stiekema W."/>
            <person name="Entian K.-D."/>
            <person name="Terryn N."/>
            <person name="Harris B."/>
            <person name="Ansorge W."/>
            <person name="Brandt P."/>
            <person name="Grivell L.A."/>
            <person name="Rieger M."/>
            <person name="Weichselgartner M."/>
            <person name="de Simone V."/>
            <person name="Obermaier B."/>
            <person name="Mache R."/>
            <person name="Mueller M."/>
            <person name="Kreis M."/>
            <person name="Delseny M."/>
            <person name="Puigdomenech P."/>
            <person name="Watson M."/>
            <person name="Schmidtheini T."/>
            <person name="Reichert B."/>
            <person name="Portetelle D."/>
            <person name="Perez-Alonso M."/>
            <person name="Boutry M."/>
            <person name="Bancroft I."/>
            <person name="Vos P."/>
            <person name="Hoheisel J."/>
            <person name="Zimmermann W."/>
            <person name="Wedler H."/>
            <person name="Ridley P."/>
            <person name="Langham S.-A."/>
            <person name="McCullagh B."/>
            <person name="Bilham L."/>
            <person name="Robben J."/>
            <person name="van der Schueren J."/>
            <person name="Grymonprez B."/>
            <person name="Chuang Y.-J."/>
            <person name="Vandenbussche F."/>
            <person name="Braeken M."/>
            <person name="Weltjens I."/>
            <person name="Voet M."/>
            <person name="Bastiaens I."/>
            <person name="Aert R."/>
            <person name="Defoor E."/>
            <person name="Weitzenegger T."/>
            <person name="Bothe G."/>
            <person name="Ramsperger U."/>
            <person name="Hilbert H."/>
            <person name="Braun M."/>
            <person name="Holzer E."/>
            <person name="Brandt A."/>
            <person name="Peters S."/>
            <person name="van Staveren M."/>
            <person name="Dirkse W."/>
            <person name="Mooijman P."/>
            <person name="Klein Lankhorst R."/>
            <person name="Rose M."/>
            <person name="Hauf J."/>
            <person name="Koetter P."/>
            <person name="Berneiser S."/>
            <person name="Hempel S."/>
            <person name="Feldpausch M."/>
            <person name="Lamberth S."/>
            <person name="Van den Daele H."/>
            <person name="De Keyser A."/>
            <person name="Buysshaert C."/>
            <person name="Gielen J."/>
            <person name="Villarroel R."/>
            <person name="De Clercq R."/>
            <person name="van Montagu M."/>
            <person name="Rogers J."/>
            <person name="Cronin A."/>
            <person name="Quail M.A."/>
            <person name="Bray-Allen S."/>
            <person name="Clark L."/>
            <person name="Doggett J."/>
            <person name="Hall S."/>
            <person name="Kay M."/>
            <person name="Lennard N."/>
            <person name="McLay K."/>
            <person name="Mayes R."/>
            <person name="Pettett A."/>
            <person name="Rajandream M.A."/>
            <person name="Lyne M."/>
            <person name="Benes V."/>
            <person name="Rechmann S."/>
            <person name="Borkova D."/>
            <person name="Bloecker H."/>
            <person name="Scharfe M."/>
            <person name="Grimm M."/>
            <person name="Loehnert T.-H."/>
            <person name="Dose S."/>
            <person name="de Haan M."/>
            <person name="Maarse A.C."/>
            <person name="Schaefer M."/>
            <person name="Mueller-Auer S."/>
            <person name="Gabel C."/>
            <person name="Fuchs M."/>
            <person name="Fartmann B."/>
            <person name="Granderath K."/>
            <person name="Dauner D."/>
            <person name="Herzl A."/>
            <person name="Neumann S."/>
            <person name="Argiriou A."/>
            <person name="Vitale D."/>
            <person name="Liguori R."/>
            <person name="Piravandi E."/>
            <person name="Massenet O."/>
            <person name="Quigley F."/>
            <person name="Clabauld G."/>
            <person name="Muendlein A."/>
            <person name="Felber R."/>
            <person name="Schnabl S."/>
            <person name="Hiller R."/>
            <person name="Schmidt W."/>
            <person name="Lecharny A."/>
            <person name="Aubourg S."/>
            <person name="Chefdor F."/>
            <person name="Cooke R."/>
            <person name="Berger C."/>
            <person name="Monfort A."/>
            <person name="Casacuberta E."/>
            <person name="Gibbons T."/>
            <person name="Weber N."/>
            <person name="Vandenbol M."/>
            <person name="Bargues M."/>
            <person name="Terol J."/>
            <person name="Torres A."/>
            <person name="Perez-Perez A."/>
            <person name="Purnelle B."/>
            <person name="Bent E."/>
            <person name="Johnson S."/>
            <person name="Tacon D."/>
            <person name="Jesse T."/>
            <person name="Heijnen L."/>
            <person name="Schwarz S."/>
            <person name="Scholler P."/>
            <person name="Heber S."/>
            <person name="Francs P."/>
            <person name="Bielke C."/>
            <person name="Frishman D."/>
            <person name="Haase D."/>
            <person name="Lemcke K."/>
            <person name="Mewes H.-W."/>
            <person name="Stocker S."/>
            <person name="Zaccaria P."/>
            <person name="Bevan M."/>
            <person name="Wilson R.K."/>
            <person name="de la Bastide M."/>
            <person name="Habermann K."/>
            <person name="Parnell L."/>
            <person name="Dedhia N."/>
            <person name="Gnoj L."/>
            <person name="Schutz K."/>
            <person name="Huang E."/>
            <person name="Spiegel L."/>
            <person name="Sekhon M."/>
            <person name="Murray J."/>
            <person name="Sheet P."/>
            <person name="Cordes M."/>
            <person name="Abu-Threideh J."/>
            <person name="Stoneking T."/>
            <person name="Kalicki J."/>
            <person name="Graves T."/>
            <person name="Harmon G."/>
            <person name="Edwards J."/>
            <person name="Latreille P."/>
            <person name="Courtney L."/>
            <person name="Cloud J."/>
            <person name="Abbott A."/>
            <person name="Scott K."/>
            <person name="Johnson D."/>
            <person name="Minx P."/>
            <person name="Bentley D."/>
            <person name="Fulton B."/>
            <person name="Miller N."/>
            <person name="Greco T."/>
            <person name="Kemp K."/>
            <person name="Kramer J."/>
            <person name="Fulton L."/>
            <person name="Mardis E."/>
            <person name="Dante M."/>
            <person name="Pepin K."/>
            <person name="Hillier L.W."/>
            <person name="Nelson J."/>
            <person name="Spieth J."/>
            <person name="Ryan E."/>
            <person name="Andrews S."/>
            <person name="Geisel C."/>
            <person name="Layman D."/>
            <person name="Du H."/>
            <person name="Ali J."/>
            <person name="Berghoff A."/>
            <person name="Jones K."/>
            <person name="Drone K."/>
            <person name="Cotton M."/>
            <person name="Joshu C."/>
            <person name="Antonoiu B."/>
            <person name="Zidanic M."/>
            <person name="Strong C."/>
            <person name="Sun H."/>
            <person name="Lamar B."/>
            <person name="Yordan C."/>
            <person name="Ma P."/>
            <person name="Zhong J."/>
            <person name="Preston R."/>
            <person name="Vil D."/>
            <person name="Shekher M."/>
            <person name="Matero A."/>
            <person name="Shah R."/>
            <person name="Swaby I.K."/>
            <person name="O'Shaughnessy A."/>
            <person name="Rodriguez M."/>
            <person name="Hoffman J."/>
            <person name="Till S."/>
            <person name="Granat S."/>
            <person name="Shohdy N."/>
            <person name="Hasegawa A."/>
            <person name="Hameed A."/>
            <person name="Lodhi M."/>
            <person name="Johnson A."/>
            <person name="Chen E."/>
            <person name="Marra M.A."/>
            <person name="Martienssen R."/>
            <person name="McCombie W.R."/>
        </authorList>
    </citation>
    <scope>NUCLEOTIDE SEQUENCE [LARGE SCALE GENOMIC DNA]</scope>
    <source>
        <strain>cv. Columbia</strain>
    </source>
</reference>
<reference key="2">
    <citation type="journal article" date="2017" name="Plant J.">
        <title>Araport11: a complete reannotation of the Arabidopsis thaliana reference genome.</title>
        <authorList>
            <person name="Cheng C.Y."/>
            <person name="Krishnakumar V."/>
            <person name="Chan A.P."/>
            <person name="Thibaud-Nissen F."/>
            <person name="Schobel S."/>
            <person name="Town C.D."/>
        </authorList>
    </citation>
    <scope>GENOME REANNOTATION</scope>
    <source>
        <strain>cv. Columbia</strain>
    </source>
</reference>
<reference key="3">
    <citation type="submission" date="2002-03" db="EMBL/GenBank/DDBJ databases">
        <title>Full-length cDNA from Arabidopsis thaliana.</title>
        <authorList>
            <person name="Brover V.V."/>
            <person name="Troukhan M.E."/>
            <person name="Alexandrov N.A."/>
            <person name="Lu Y.-P."/>
            <person name="Flavell R.B."/>
            <person name="Feldmann K.A."/>
        </authorList>
    </citation>
    <scope>NUCLEOTIDE SEQUENCE [LARGE SCALE MRNA]</scope>
</reference>
<reference key="4">
    <citation type="journal article" date="2007" name="Plant J.">
        <title>Characterization of Arabidopsis thaliana mismatch specific endonucleases: application to mutation discovery by TILLING in pea.</title>
        <authorList>
            <person name="Triques K."/>
            <person name="Sturbois B."/>
            <person name="Gallais S."/>
            <person name="Dalmais M."/>
            <person name="Chauvin S."/>
            <person name="Clepet C."/>
            <person name="Aubourg S."/>
            <person name="Rameau C."/>
            <person name="Caboche M."/>
            <person name="Bendahmane A."/>
        </authorList>
    </citation>
    <scope>FUNCTION</scope>
    <scope>CATALYTIC ACTIVITY</scope>
    <scope>GENE FAMILY</scope>
    <scope>NOMENCLATURE</scope>
</reference>
<reference key="5">
    <citation type="journal article" date="2013" name="Plant Cell Physiol.">
        <title>The plant s1-like nuclease family has evolved a highly diverse range of catalytic capabilities.</title>
        <authorList>
            <person name="Lesniewicz K."/>
            <person name="Karlowski W.M."/>
            <person name="Pienkowska J.R."/>
            <person name="Krzywkowski P."/>
            <person name="Poreba E."/>
        </authorList>
    </citation>
    <scope>FUNCTION</scope>
    <scope>MUTAGENESIS OF 281-ALA--LEU-296</scope>
    <scope>BIOPHYSICOCHEMICAL PROPERTIES</scope>
    <scope>CATALYTIC ACTIVITY</scope>
    <scope>COFACTOR</scope>
    <scope>PROTEOLYTIC CLEAVAGE</scope>
    <scope>GENE FAMILY</scope>
</reference>
<accession>F4JJL3</accession>
<accession>O65425</accession>
<accession>Q8LA68</accession>
<comment type="function">
    <text evidence="7 8">Hydrolyzes, with low efficiency, only single-stranded DNA and RNA without apparent specificity for bases (PubMed:17651368, PubMed:23620482). Endonuclease that recognizes and cleaves some mismatches with high efficiency, including heteroduplex double-stranded DNA; mostly efficient on T/G, A/G and G/G mismatches, less efficient for T/T and poorly efficient for C/C, A/A, T/C and A/C (PubMed:17651368).</text>
</comment>
<comment type="catalytic activity">
    <reaction evidence="7 8">
        <text>Endonucleolytic cleavage to 5'-phosphomononucleotide and 5'-phosphooligonucleotide end-products.</text>
        <dbReference type="EC" id="3.1.30.1"/>
    </reaction>
</comment>
<comment type="cofactor">
    <cofactor evidence="8">
        <name>Zn(2+)</name>
        <dbReference type="ChEBI" id="CHEBI:29105"/>
    </cofactor>
    <text evidence="8">Binds 3 divalent metal cations.</text>
</comment>
<comment type="biophysicochemical properties">
    <phDependence>
        <text evidence="8">Optimum pH is 8 with RNA and ssDNA as substrates.</text>
    </phDependence>
</comment>
<comment type="subunit">
    <text evidence="1">Monomer.</text>
</comment>
<comment type="similarity">
    <text evidence="10">Belongs to the nuclease type I family.</text>
</comment>
<comment type="sequence caution" evidence="10">
    <conflict type="erroneous gene model prediction">
        <sequence resource="EMBL-CDS" id="CAA18724"/>
    </conflict>
</comment>
<comment type="sequence caution" evidence="10">
    <conflict type="erroneous gene model prediction">
        <sequence resource="EMBL-CDS" id="CAB36804"/>
    </conflict>
</comment>
<comment type="sequence caution" evidence="10">
    <conflict type="erroneous gene model prediction">
        <sequence resource="EMBL-CDS" id="CAB81267"/>
    </conflict>
</comment>
<dbReference type="EC" id="3.1.30.1" evidence="7 8"/>
<dbReference type="EMBL" id="AL022603">
    <property type="protein sequence ID" value="CAA18724.1"/>
    <property type="status" value="ALT_SEQ"/>
    <property type="molecule type" value="Genomic_DNA"/>
</dbReference>
<dbReference type="EMBL" id="AL035527">
    <property type="protein sequence ID" value="CAB36804.1"/>
    <property type="status" value="ALT_SEQ"/>
    <property type="molecule type" value="Genomic_DNA"/>
</dbReference>
<dbReference type="EMBL" id="AL161555">
    <property type="protein sequence ID" value="CAB81267.1"/>
    <property type="status" value="ALT_SEQ"/>
    <property type="molecule type" value="Genomic_DNA"/>
</dbReference>
<dbReference type="EMBL" id="CP002687">
    <property type="protein sequence ID" value="AEE84479.1"/>
    <property type="molecule type" value="Genomic_DNA"/>
</dbReference>
<dbReference type="EMBL" id="AY087996">
    <property type="protein sequence ID" value="AAM65542.1"/>
    <property type="molecule type" value="mRNA"/>
</dbReference>
<dbReference type="PIR" id="T05168">
    <property type="entry name" value="T05168"/>
</dbReference>
<dbReference type="RefSeq" id="NP_567631.1">
    <property type="nucleotide sequence ID" value="NM_118280.2"/>
</dbReference>
<dbReference type="SMR" id="F4JJL3"/>
<dbReference type="BioGRID" id="13535">
    <property type="interactions" value="1"/>
</dbReference>
<dbReference type="FunCoup" id="F4JJL3">
    <property type="interactions" value="184"/>
</dbReference>
<dbReference type="STRING" id="3702.F4JJL3"/>
<dbReference type="GlyCosmos" id="F4JJL3">
    <property type="glycosylation" value="4 sites, No reported glycans"/>
</dbReference>
<dbReference type="GlyGen" id="F4JJL3">
    <property type="glycosylation" value="5 sites"/>
</dbReference>
<dbReference type="PaxDb" id="3702-AT4G21600.1"/>
<dbReference type="ProteomicsDB" id="222694"/>
<dbReference type="EnsemblPlants" id="AT4G21600.1">
    <property type="protein sequence ID" value="AT4G21600.1"/>
    <property type="gene ID" value="AT4G21600"/>
</dbReference>
<dbReference type="GeneID" id="828246"/>
<dbReference type="Gramene" id="AT4G21600.1">
    <property type="protein sequence ID" value="AT4G21600.1"/>
    <property type="gene ID" value="AT4G21600"/>
</dbReference>
<dbReference type="KEGG" id="ath:AT4G21600"/>
<dbReference type="Araport" id="AT4G21600"/>
<dbReference type="TAIR" id="AT4G21600">
    <property type="gene designation" value="ENDO5"/>
</dbReference>
<dbReference type="eggNOG" id="ENOG502QRXU">
    <property type="taxonomic scope" value="Eukaryota"/>
</dbReference>
<dbReference type="HOGENOM" id="CLU_044365_3_0_1"/>
<dbReference type="InParanoid" id="F4JJL3"/>
<dbReference type="OMA" id="QLHAVWD"/>
<dbReference type="BRENDA" id="3.1.30.2">
    <property type="organism ID" value="399"/>
</dbReference>
<dbReference type="PRO" id="PR:F4JJL3"/>
<dbReference type="Proteomes" id="UP000006548">
    <property type="component" value="Chromosome 4"/>
</dbReference>
<dbReference type="ExpressionAtlas" id="F4JJL3">
    <property type="expression patterns" value="baseline and differential"/>
</dbReference>
<dbReference type="GO" id="GO:0004519">
    <property type="term" value="F:endonuclease activity"/>
    <property type="evidence" value="ECO:0000314"/>
    <property type="project" value="UniProtKB"/>
</dbReference>
<dbReference type="GO" id="GO:0046872">
    <property type="term" value="F:metal ion binding"/>
    <property type="evidence" value="ECO:0007669"/>
    <property type="project" value="UniProtKB-KW"/>
</dbReference>
<dbReference type="GO" id="GO:0003676">
    <property type="term" value="F:nucleic acid binding"/>
    <property type="evidence" value="ECO:0007669"/>
    <property type="project" value="InterPro"/>
</dbReference>
<dbReference type="GO" id="GO:0004521">
    <property type="term" value="F:RNA endonuclease activity"/>
    <property type="evidence" value="ECO:0000314"/>
    <property type="project" value="UniProtKB"/>
</dbReference>
<dbReference type="GO" id="GO:0000014">
    <property type="term" value="F:single-stranded DNA endodeoxyribonuclease activity"/>
    <property type="evidence" value="ECO:0000314"/>
    <property type="project" value="UniProtKB"/>
</dbReference>
<dbReference type="GO" id="GO:0043765">
    <property type="term" value="F:T/G mismatch-specific endonuclease activity"/>
    <property type="evidence" value="ECO:0000314"/>
    <property type="project" value="TAIR"/>
</dbReference>
<dbReference type="GO" id="GO:0006308">
    <property type="term" value="P:DNA catabolic process"/>
    <property type="evidence" value="ECO:0000314"/>
    <property type="project" value="UniProtKB"/>
</dbReference>
<dbReference type="CDD" id="cd11010">
    <property type="entry name" value="S1-P1_nuclease"/>
    <property type="match status" value="1"/>
</dbReference>
<dbReference type="FunFam" id="1.10.575.10:FF:000002">
    <property type="entry name" value="Endonuclease 2"/>
    <property type="match status" value="1"/>
</dbReference>
<dbReference type="Gene3D" id="1.10.575.10">
    <property type="entry name" value="P1 Nuclease"/>
    <property type="match status" value="1"/>
</dbReference>
<dbReference type="InterPro" id="IPR008947">
    <property type="entry name" value="PLipase_C/P1_nuclease_dom_sf"/>
</dbReference>
<dbReference type="InterPro" id="IPR003154">
    <property type="entry name" value="S1/P1nuclease"/>
</dbReference>
<dbReference type="PANTHER" id="PTHR33146">
    <property type="entry name" value="ENDONUCLEASE 4"/>
    <property type="match status" value="1"/>
</dbReference>
<dbReference type="PANTHER" id="PTHR33146:SF23">
    <property type="entry name" value="ENDONUCLEASE 5"/>
    <property type="match status" value="1"/>
</dbReference>
<dbReference type="Pfam" id="PF02265">
    <property type="entry name" value="S1-P1_nuclease"/>
    <property type="match status" value="1"/>
</dbReference>
<dbReference type="SUPFAM" id="SSF48537">
    <property type="entry name" value="Phospholipase C/P1 nuclease"/>
    <property type="match status" value="1"/>
</dbReference>
<organism>
    <name type="scientific">Arabidopsis thaliana</name>
    <name type="common">Mouse-ear cress</name>
    <dbReference type="NCBI Taxonomy" id="3702"/>
    <lineage>
        <taxon>Eukaryota</taxon>
        <taxon>Viridiplantae</taxon>
        <taxon>Streptophyta</taxon>
        <taxon>Embryophyta</taxon>
        <taxon>Tracheophyta</taxon>
        <taxon>Spermatophyta</taxon>
        <taxon>Magnoliopsida</taxon>
        <taxon>eudicotyledons</taxon>
        <taxon>Gunneridae</taxon>
        <taxon>Pentapetalae</taxon>
        <taxon>rosids</taxon>
        <taxon>malvids</taxon>
        <taxon>Brassicales</taxon>
        <taxon>Brassicaceae</taxon>
        <taxon>Camelineae</taxon>
        <taxon>Arabidopsis</taxon>
    </lineage>
</organism>
<name>ENDO5_ARATH</name>